<feature type="chain" id="PRO_0000200995" description="UPF0761 membrane protein YihY">
    <location>
        <begin position="1"/>
        <end position="290"/>
    </location>
</feature>
<feature type="topological domain" description="Cytoplasmic" evidence="1">
    <location>
        <begin position="1"/>
        <end position="43"/>
    </location>
</feature>
<feature type="transmembrane region" description="Helical" evidence="2">
    <location>
        <begin position="44"/>
        <end position="64"/>
    </location>
</feature>
<feature type="topological domain" description="Periplasmic" evidence="1">
    <location>
        <begin position="65"/>
        <end position="103"/>
    </location>
</feature>
<feature type="transmembrane region" description="Helical" evidence="2">
    <location>
        <begin position="104"/>
        <end position="124"/>
    </location>
</feature>
<feature type="topological domain" description="Cytoplasmic" evidence="1">
    <location>
        <begin position="125"/>
        <end position="139"/>
    </location>
</feature>
<feature type="transmembrane region" description="Helical" evidence="2">
    <location>
        <begin position="140"/>
        <end position="160"/>
    </location>
</feature>
<feature type="topological domain" description="Periplasmic" evidence="1">
    <location>
        <begin position="161"/>
        <end position="179"/>
    </location>
</feature>
<feature type="transmembrane region" description="Helical" evidence="2">
    <location>
        <begin position="180"/>
        <end position="200"/>
    </location>
</feature>
<feature type="topological domain" description="Cytoplasmic" evidence="1">
    <location>
        <begin position="201"/>
        <end position="209"/>
    </location>
</feature>
<feature type="transmembrane region" description="Helical" evidence="2">
    <location>
        <begin position="210"/>
        <end position="230"/>
    </location>
</feature>
<feature type="topological domain" description="Periplasmic" evidence="1">
    <location>
        <begin position="231"/>
        <end position="243"/>
    </location>
</feature>
<feature type="transmembrane region" description="Helical" evidence="2">
    <location>
        <begin position="244"/>
        <end position="264"/>
    </location>
</feature>
<feature type="topological domain" description="Cytoplasmic" evidence="1">
    <location>
        <begin position="265"/>
        <end position="290"/>
    </location>
</feature>
<keyword id="KW-0997">Cell inner membrane</keyword>
<keyword id="KW-1003">Cell membrane</keyword>
<keyword id="KW-0472">Membrane</keyword>
<keyword id="KW-1185">Reference proteome</keyword>
<keyword id="KW-0812">Transmembrane</keyword>
<keyword id="KW-1133">Transmembrane helix</keyword>
<organism>
    <name type="scientific">Salmonella typhimurium (strain LT2 / SGSC1412 / ATCC 700720)</name>
    <dbReference type="NCBI Taxonomy" id="99287"/>
    <lineage>
        <taxon>Bacteria</taxon>
        <taxon>Pseudomonadati</taxon>
        <taxon>Pseudomonadota</taxon>
        <taxon>Gammaproteobacteria</taxon>
        <taxon>Enterobacterales</taxon>
        <taxon>Enterobacteriaceae</taxon>
        <taxon>Salmonella</taxon>
    </lineage>
</organism>
<accession>Q8ZKT5</accession>
<reference key="1">
    <citation type="journal article" date="2001" name="Nature">
        <title>Complete genome sequence of Salmonella enterica serovar Typhimurium LT2.</title>
        <authorList>
            <person name="McClelland M."/>
            <person name="Sanderson K.E."/>
            <person name="Spieth J."/>
            <person name="Clifton S.W."/>
            <person name="Latreille P."/>
            <person name="Courtney L."/>
            <person name="Porwollik S."/>
            <person name="Ali J."/>
            <person name="Dante M."/>
            <person name="Du F."/>
            <person name="Hou S."/>
            <person name="Layman D."/>
            <person name="Leonard S."/>
            <person name="Nguyen C."/>
            <person name="Scott K."/>
            <person name="Holmes A."/>
            <person name="Grewal N."/>
            <person name="Mulvaney E."/>
            <person name="Ryan E."/>
            <person name="Sun H."/>
            <person name="Florea L."/>
            <person name="Miller W."/>
            <person name="Stoneking T."/>
            <person name="Nhan M."/>
            <person name="Waterston R."/>
            <person name="Wilson R.K."/>
        </authorList>
    </citation>
    <scope>NUCLEOTIDE SEQUENCE [LARGE SCALE GENOMIC DNA]</scope>
    <source>
        <strain>LT2 / SGSC1412 / ATCC 700720</strain>
    </source>
</reference>
<sequence length="290" mass="32654">MLKTVHQKAGRHTRPVRAWLKLLWQRIDEDNMTTLAGNLAYVSLLSLVPLIAVVFALFAAFPMFSDVSIQLRHFIFANFMPATGDVIQRYIEQFVANSNKMTAVGACGLIVTALLLMYAIDSALNTIWRSKRTRPKVYSFAVYWMILTLGPLLAGVSLAISSYLLSLRWASDLNTVIDNVLHILPLLLSWISFWLLYSIVPTTRVPNRDALVGAFVAALLFEAGKKGFALYITMFPSYQLIYGVLAVIPILFVWVYWTWCIVLLGAEITVTLGEYRKLKQAAEQEEADQP</sequence>
<name>YIHY_SALTY</name>
<protein>
    <recommendedName>
        <fullName evidence="2">UPF0761 membrane protein YihY</fullName>
    </recommendedName>
</protein>
<gene>
    <name evidence="2" type="primary">yihY</name>
    <name type="ordered locus">STM4027</name>
</gene>
<evidence type="ECO:0000255" key="1"/>
<evidence type="ECO:0000255" key="2">
    <source>
        <dbReference type="HAMAP-Rule" id="MF_00672"/>
    </source>
</evidence>
<dbReference type="EMBL" id="AE006468">
    <property type="protein sequence ID" value="AAL22866.1"/>
    <property type="molecule type" value="Genomic_DNA"/>
</dbReference>
<dbReference type="RefSeq" id="WP_000921427.1">
    <property type="nucleotide sequence ID" value="NC_003197.2"/>
</dbReference>
<dbReference type="STRING" id="99287.STM4027"/>
<dbReference type="PaxDb" id="99287-STM4027"/>
<dbReference type="KEGG" id="stm:STM4027"/>
<dbReference type="PATRIC" id="fig|99287.12.peg.4242"/>
<dbReference type="HOGENOM" id="CLU_032288_0_0_6"/>
<dbReference type="OMA" id="KQPKFRW"/>
<dbReference type="PhylomeDB" id="Q8ZKT5"/>
<dbReference type="BioCyc" id="SENT99287:STM4027-MONOMER"/>
<dbReference type="Proteomes" id="UP000001014">
    <property type="component" value="Chromosome"/>
</dbReference>
<dbReference type="GO" id="GO:0005886">
    <property type="term" value="C:plasma membrane"/>
    <property type="evidence" value="ECO:0000318"/>
    <property type="project" value="GO_Central"/>
</dbReference>
<dbReference type="HAMAP" id="MF_00672">
    <property type="entry name" value="UPF0761"/>
    <property type="match status" value="1"/>
</dbReference>
<dbReference type="InterPro" id="IPR023679">
    <property type="entry name" value="UPF0761_bac"/>
</dbReference>
<dbReference type="InterPro" id="IPR017039">
    <property type="entry name" value="Virul_fac_BrkB"/>
</dbReference>
<dbReference type="NCBIfam" id="NF002457">
    <property type="entry name" value="PRK01637.1"/>
    <property type="match status" value="1"/>
</dbReference>
<dbReference type="NCBIfam" id="TIGR00765">
    <property type="entry name" value="yihY_not_rbn"/>
    <property type="match status" value="1"/>
</dbReference>
<dbReference type="PANTHER" id="PTHR30213">
    <property type="entry name" value="INNER MEMBRANE PROTEIN YHJD"/>
    <property type="match status" value="1"/>
</dbReference>
<dbReference type="PANTHER" id="PTHR30213:SF0">
    <property type="entry name" value="UPF0761 MEMBRANE PROTEIN YIHY"/>
    <property type="match status" value="1"/>
</dbReference>
<dbReference type="Pfam" id="PF03631">
    <property type="entry name" value="Virul_fac_BrkB"/>
    <property type="match status" value="1"/>
</dbReference>
<dbReference type="PIRSF" id="PIRSF035875">
    <property type="entry name" value="RNase_BN"/>
    <property type="match status" value="1"/>
</dbReference>
<proteinExistence type="inferred from homology"/>
<comment type="subcellular location">
    <subcellularLocation>
        <location evidence="2">Cell inner membrane</location>
        <topology evidence="2">Multi-pass membrane protein</topology>
    </subcellularLocation>
</comment>
<comment type="similarity">
    <text evidence="2">Belongs to the UPF0761 family.</text>
</comment>